<protein>
    <recommendedName>
        <fullName>Cap-specific mRNA (nucleoside-2'-O-)-methyltransferase 1</fullName>
        <ecNumber evidence="2">2.1.1.57</ecNumber>
    </recommendedName>
    <alternativeName>
        <fullName>Cap methyltransferase 1</fullName>
    </alternativeName>
    <alternativeName>
        <fullName>Cap1 2'O-ribose methyltransferase 1</fullName>
        <shortName>MTr1</shortName>
    </alternativeName>
    <alternativeName>
        <fullName>FtsJ methyltransferase domain-containing protein 2</fullName>
    </alternativeName>
</protein>
<comment type="function">
    <text evidence="2">S-adenosyl-L-methionine-dependent methyltransferase that mediates mRNA cap1 2'-O-ribose methylation to the 5'-cap structure of mRNAs. Methylates the ribose of the first nucleotide of a m(7)GpppG-capped mRNA and small nuclear RNA (snRNA) to produce m(7)GpppRm (cap1). Displays a preference for cap0 transcripts. Cap1 modification is linked to higher levels of translation. May be involved in the interferon response pathway.</text>
</comment>
<comment type="catalytic activity">
    <reaction evidence="2">
        <text>a 5'-end (N(7)-methyl 5'-triphosphoguanosine)-ribonucleoside in mRNA + S-adenosyl-L-methionine = a 5'-end (N(7)-methyl 5'-triphosphoguanosine)-(2'-O-methyl-ribonucleoside) in mRNA + S-adenosyl-L-homocysteine + H(+)</text>
        <dbReference type="Rhea" id="RHEA:67020"/>
        <dbReference type="Rhea" id="RHEA-COMP:17167"/>
        <dbReference type="Rhea" id="RHEA-COMP:17168"/>
        <dbReference type="ChEBI" id="CHEBI:15378"/>
        <dbReference type="ChEBI" id="CHEBI:57856"/>
        <dbReference type="ChEBI" id="CHEBI:59789"/>
        <dbReference type="ChEBI" id="CHEBI:156461"/>
        <dbReference type="ChEBI" id="CHEBI:167609"/>
        <dbReference type="EC" id="2.1.1.57"/>
    </reaction>
</comment>
<comment type="subunit">
    <text evidence="2">Interacts with POLR2A (via C-terminus).</text>
</comment>
<comment type="subcellular location">
    <subcellularLocation>
        <location evidence="2">Nucleus</location>
    </subcellularLocation>
</comment>
<organism>
    <name type="scientific">Pongo abelii</name>
    <name type="common">Sumatran orangutan</name>
    <name type="synonym">Pongo pygmaeus abelii</name>
    <dbReference type="NCBI Taxonomy" id="9601"/>
    <lineage>
        <taxon>Eukaryota</taxon>
        <taxon>Metazoa</taxon>
        <taxon>Chordata</taxon>
        <taxon>Craniata</taxon>
        <taxon>Vertebrata</taxon>
        <taxon>Euteleostomi</taxon>
        <taxon>Mammalia</taxon>
        <taxon>Eutheria</taxon>
        <taxon>Euarchontoglires</taxon>
        <taxon>Primates</taxon>
        <taxon>Haplorrhini</taxon>
        <taxon>Catarrhini</taxon>
        <taxon>Hominidae</taxon>
        <taxon>Pongo</taxon>
    </lineage>
</organism>
<sequence>MKRRTDPECTAPIKKQKKRVAELALSLSSTSDDEPPSSVSHGAKASTTSLSGSDSETEGKQHSSDSFDDAFKADSLVEGTSSRYSMYNSVSQKLMAKMGFREGEGLGKYSQGRKDIVEASSQKGRRGLGLTLRGFDQELNVDWRDEPEPSACEQVSWFPECTTEIPDTQEMSDWMVVGKRKMIIEDETEFCGEELLHSVLQCKSVFDVLDGEEMRRARTRANPYEMIRGVFFLNRAAMKMANMDFVFDRMFTNPRDSYGKPLVKDREAELLYFADVCAGPGGFSEYVLWRKKWHAKGFGMTLKGPNDFKLEDFYSASSELFEPYYGEGGIDGDGDITRPENISAFRNFVLDNTDRKGVHFLMADGGFSVEGQENLQEILSKQLLLCQFLMALSIVRTGGHFICKTFDLFTPFSVGLVYLLYCCFERVCLFKPITSRPANSERYVVCKGLKVGIDDVRDYLFAVNIKLNQLRNTDSDVNLVVPLEVIKGDHEFTDYMIRSNESHCSLQIKALAKIHAFVQDTTLSEPRQAEIRKECLRLWGIPDQARVAPSSSDPKSKFFELIQGTEIDIFSYKPTLLTSKTLEKIRPVFDYRCMVSGSEQKFLIGLGKSQIYTWDGRQSDRWIKLDLKTELPRDTLLSVEIVHELKGEGKAQRKISAIHILDVLVLNGTDVREQHFNQRIQLAEKFVKAVSKPSRPDMNPIRVKEVYRLEEMEKIFVRLEMKIIKGSSGTPKLSYTGRDDRHFVPMGLYIVRTVNEPWTMGFSKSFKKKFFYNKKTKDSTFDLPADSIAPFHICYYGRLFWEWGDGIRVHDSQKPQDQDKLSKEDVLSFIQMHRA</sequence>
<proteinExistence type="evidence at transcript level"/>
<evidence type="ECO:0000250" key="1"/>
<evidence type="ECO:0000250" key="2">
    <source>
        <dbReference type="UniProtKB" id="Q8N1G2"/>
    </source>
</evidence>
<evidence type="ECO:0000250" key="3">
    <source>
        <dbReference type="UniProtKB" id="Q9DBC3"/>
    </source>
</evidence>
<evidence type="ECO:0000255" key="4">
    <source>
        <dbReference type="PROSITE-ProRule" id="PRU00092"/>
    </source>
</evidence>
<evidence type="ECO:0000255" key="5">
    <source>
        <dbReference type="PROSITE-ProRule" id="PRU00224"/>
    </source>
</evidence>
<evidence type="ECO:0000255" key="6">
    <source>
        <dbReference type="PROSITE-ProRule" id="PRU00768"/>
    </source>
</evidence>
<evidence type="ECO:0000255" key="7">
    <source>
        <dbReference type="PROSITE-ProRule" id="PRU00945"/>
    </source>
</evidence>
<evidence type="ECO:0000256" key="8">
    <source>
        <dbReference type="SAM" id="MobiDB-lite"/>
    </source>
</evidence>
<reference key="1">
    <citation type="submission" date="2004-11" db="EMBL/GenBank/DDBJ databases">
        <authorList>
            <consortium name="The German cDNA consortium"/>
        </authorList>
    </citation>
    <scope>NUCLEOTIDE SEQUENCE [LARGE SCALE MRNA]</scope>
    <source>
        <tissue>Brain cortex</tissue>
    </source>
</reference>
<name>CMTR1_PONAB</name>
<keyword id="KW-0007">Acetylation</keyword>
<keyword id="KW-0489">Methyltransferase</keyword>
<keyword id="KW-0506">mRNA capping</keyword>
<keyword id="KW-0507">mRNA processing</keyword>
<keyword id="KW-0539">Nucleus</keyword>
<keyword id="KW-0597">Phosphoprotein</keyword>
<keyword id="KW-1185">Reference proteome</keyword>
<keyword id="KW-0949">S-adenosyl-L-methionine</keyword>
<keyword id="KW-0808">Transferase</keyword>
<dbReference type="EC" id="2.1.1.57" evidence="2"/>
<dbReference type="EMBL" id="CR859510">
    <property type="protein sequence ID" value="CAH91679.1"/>
    <property type="molecule type" value="mRNA"/>
</dbReference>
<dbReference type="RefSeq" id="NP_001125983.1">
    <property type="nucleotide sequence ID" value="NM_001132511.1"/>
</dbReference>
<dbReference type="RefSeq" id="XP_024103637.1">
    <property type="nucleotide sequence ID" value="XM_024247869.3"/>
</dbReference>
<dbReference type="SMR" id="Q5R981"/>
<dbReference type="FunCoup" id="Q5R981">
    <property type="interactions" value="5216"/>
</dbReference>
<dbReference type="STRING" id="9601.ENSPPYP00000018525"/>
<dbReference type="Ensembl" id="ENSPPYT00000019263.3">
    <property type="protein sequence ID" value="ENSPPYP00000018525.2"/>
    <property type="gene ID" value="ENSPPYG00000016562.3"/>
</dbReference>
<dbReference type="GeneID" id="100172922"/>
<dbReference type="KEGG" id="pon:100172922"/>
<dbReference type="CTD" id="23070"/>
<dbReference type="eggNOG" id="KOG3673">
    <property type="taxonomic scope" value="Eukaryota"/>
</dbReference>
<dbReference type="GeneTree" id="ENSGT00940000157172"/>
<dbReference type="HOGENOM" id="CLU_011097_0_0_1"/>
<dbReference type="InParanoid" id="Q5R981"/>
<dbReference type="OMA" id="CTLFLCK"/>
<dbReference type="OrthoDB" id="10251234at2759"/>
<dbReference type="TreeFam" id="TF314897"/>
<dbReference type="Proteomes" id="UP000001595">
    <property type="component" value="Chromosome 6"/>
</dbReference>
<dbReference type="GO" id="GO:0005737">
    <property type="term" value="C:cytoplasm"/>
    <property type="evidence" value="ECO:0007669"/>
    <property type="project" value="TreeGrafter"/>
</dbReference>
<dbReference type="GO" id="GO:0005654">
    <property type="term" value="C:nucleoplasm"/>
    <property type="evidence" value="ECO:0007669"/>
    <property type="project" value="Ensembl"/>
</dbReference>
<dbReference type="GO" id="GO:0005634">
    <property type="term" value="C:nucleus"/>
    <property type="evidence" value="ECO:0000250"/>
    <property type="project" value="UniProtKB"/>
</dbReference>
<dbReference type="GO" id="GO:0004483">
    <property type="term" value="F:mRNA (nucleoside-2'-O-)-methyltransferase activity"/>
    <property type="evidence" value="ECO:0000250"/>
    <property type="project" value="UniProtKB"/>
</dbReference>
<dbReference type="GO" id="GO:0003676">
    <property type="term" value="F:nucleic acid binding"/>
    <property type="evidence" value="ECO:0007669"/>
    <property type="project" value="InterPro"/>
</dbReference>
<dbReference type="GO" id="GO:0006370">
    <property type="term" value="P:7-methylguanosine mRNA capping"/>
    <property type="evidence" value="ECO:0000250"/>
    <property type="project" value="UniProtKB"/>
</dbReference>
<dbReference type="GO" id="GO:0032259">
    <property type="term" value="P:methylation"/>
    <property type="evidence" value="ECO:0007669"/>
    <property type="project" value="UniProtKB-KW"/>
</dbReference>
<dbReference type="GO" id="GO:0006397">
    <property type="term" value="P:mRNA processing"/>
    <property type="evidence" value="ECO:0000250"/>
    <property type="project" value="UniProtKB"/>
</dbReference>
<dbReference type="FunFam" id="3.30.470.30:FF:000006">
    <property type="entry name" value="Cap methyltransferase 1"/>
    <property type="match status" value="1"/>
</dbReference>
<dbReference type="FunFam" id="3.40.50.12760:FF:000001">
    <property type="entry name" value="Cap methyltransferase 1"/>
    <property type="match status" value="1"/>
</dbReference>
<dbReference type="Gene3D" id="3.40.50.12760">
    <property type="match status" value="1"/>
</dbReference>
<dbReference type="Gene3D" id="3.30.470.30">
    <property type="entry name" value="DNA ligase/mRNA capping enzyme"/>
    <property type="match status" value="1"/>
</dbReference>
<dbReference type="InterPro" id="IPR000467">
    <property type="entry name" value="G_patch_dom"/>
</dbReference>
<dbReference type="InterPro" id="IPR050851">
    <property type="entry name" value="mRNA_Cap_2O-Ribose_MeTrfase"/>
</dbReference>
<dbReference type="InterPro" id="IPR002877">
    <property type="entry name" value="RNA_MeTrfase_FtsJ_dom"/>
</dbReference>
<dbReference type="InterPro" id="IPR025816">
    <property type="entry name" value="RrmJ-type_MeTrfase"/>
</dbReference>
<dbReference type="InterPro" id="IPR029063">
    <property type="entry name" value="SAM-dependent_MTases_sf"/>
</dbReference>
<dbReference type="InterPro" id="IPR001202">
    <property type="entry name" value="WW_dom"/>
</dbReference>
<dbReference type="PANTHER" id="PTHR16121:SF0">
    <property type="entry name" value="CAP-SPECIFIC MRNA (NUCLEOSIDE-2'-O-)-METHYLTRANSFERASE 1"/>
    <property type="match status" value="1"/>
</dbReference>
<dbReference type="PANTHER" id="PTHR16121">
    <property type="entry name" value="CAP-SPECIFIC MRNA (NUCLEOSIDE-2'-O-)-METHYLTRANSFERASE 1-RELATED"/>
    <property type="match status" value="1"/>
</dbReference>
<dbReference type="Pfam" id="PF01728">
    <property type="entry name" value="FtsJ"/>
    <property type="match status" value="1"/>
</dbReference>
<dbReference type="Pfam" id="PF01585">
    <property type="entry name" value="G-patch"/>
    <property type="match status" value="1"/>
</dbReference>
<dbReference type="SMART" id="SM00443">
    <property type="entry name" value="G_patch"/>
    <property type="match status" value="1"/>
</dbReference>
<dbReference type="SMART" id="SM00456">
    <property type="entry name" value="WW"/>
    <property type="match status" value="1"/>
</dbReference>
<dbReference type="SUPFAM" id="SSF53335">
    <property type="entry name" value="S-adenosyl-L-methionine-dependent methyltransferases"/>
    <property type="match status" value="1"/>
</dbReference>
<dbReference type="PROSITE" id="PS50174">
    <property type="entry name" value="G_PATCH"/>
    <property type="match status" value="1"/>
</dbReference>
<dbReference type="PROSITE" id="PS51613">
    <property type="entry name" value="SAM_MT_RRMJ"/>
    <property type="match status" value="1"/>
</dbReference>
<dbReference type="PROSITE" id="PS01159">
    <property type="entry name" value="WW_DOMAIN_1"/>
    <property type="match status" value="1"/>
</dbReference>
<accession>Q5R981</accession>
<feature type="chain" id="PRO_0000251241" description="Cap-specific mRNA (nucleoside-2'-O-)-methyltransferase 1">
    <location>
        <begin position="1"/>
        <end position="835"/>
    </location>
</feature>
<feature type="domain" description="G-patch" evidence="4">
    <location>
        <begin position="87"/>
        <end position="133"/>
    </location>
</feature>
<feature type="domain" description="RrmJ-type SAM-dependent 2'-O-MTase" evidence="7">
    <location>
        <begin position="231"/>
        <end position="450"/>
    </location>
</feature>
<feature type="domain" description="WW" evidence="5">
    <location>
        <begin position="752"/>
        <end position="786"/>
    </location>
</feature>
<feature type="region of interest" description="Disordered" evidence="8">
    <location>
        <begin position="1"/>
        <end position="67"/>
    </location>
</feature>
<feature type="region of interest" description="Interaction with POLR2A" evidence="1">
    <location>
        <begin position="727"/>
        <end position="835"/>
    </location>
</feature>
<feature type="short sequence motif" description="Bipartite nuclear localization signal" evidence="6">
    <location>
        <begin position="2"/>
        <end position="19"/>
    </location>
</feature>
<feature type="compositionally biased region" description="Polar residues" evidence="8">
    <location>
        <begin position="37"/>
        <end position="54"/>
    </location>
</feature>
<feature type="compositionally biased region" description="Basic and acidic residues" evidence="8">
    <location>
        <begin position="57"/>
        <end position="67"/>
    </location>
</feature>
<feature type="active site" evidence="2">
    <location>
        <position position="239"/>
    </location>
</feature>
<feature type="active site" evidence="2">
    <location>
        <position position="364"/>
    </location>
</feature>
<feature type="active site" description="Proton acceptor" evidence="7">
    <location>
        <position position="404"/>
    </location>
</feature>
<feature type="binding site" evidence="2">
    <location>
        <begin position="203"/>
        <end position="207"/>
    </location>
    <ligand>
        <name>substrate</name>
    </ligand>
</feature>
<feature type="binding site" evidence="2">
    <location>
        <position position="218"/>
    </location>
    <ligand>
        <name>substrate</name>
    </ligand>
</feature>
<feature type="binding site" evidence="2">
    <location>
        <position position="234"/>
    </location>
    <ligand>
        <name>S-adenosyl-L-methionine</name>
        <dbReference type="ChEBI" id="CHEBI:59789"/>
    </ligand>
</feature>
<feature type="binding site" evidence="2">
    <location>
        <begin position="277"/>
        <end position="283"/>
    </location>
    <ligand>
        <name>S-adenosyl-L-methionine</name>
        <dbReference type="ChEBI" id="CHEBI:59789"/>
    </ligand>
</feature>
<feature type="binding site" evidence="2">
    <location>
        <begin position="335"/>
        <end position="336"/>
    </location>
    <ligand>
        <name>S-adenosyl-L-methionine</name>
        <dbReference type="ChEBI" id="CHEBI:59789"/>
    </ligand>
</feature>
<feature type="binding site" evidence="2">
    <location>
        <begin position="374"/>
        <end position="376"/>
    </location>
    <ligand>
        <name>substrate</name>
    </ligand>
</feature>
<feature type="binding site" evidence="2">
    <location>
        <position position="439"/>
    </location>
    <ligand>
        <name>substrate</name>
    </ligand>
</feature>
<feature type="modified residue" description="Phosphoserine" evidence="3">
    <location>
        <position position="28"/>
    </location>
</feature>
<feature type="modified residue" description="Phosphoserine" evidence="3">
    <location>
        <position position="31"/>
    </location>
</feature>
<feature type="modified residue" description="Phosphoserine" evidence="2">
    <location>
        <position position="53"/>
    </location>
</feature>
<feature type="modified residue" description="Phosphoserine" evidence="2">
    <location>
        <position position="66"/>
    </location>
</feature>
<feature type="modified residue" description="Phosphoserine" evidence="2">
    <location>
        <position position="91"/>
    </location>
</feature>
<feature type="modified residue" description="N6-acetyllysine" evidence="2">
    <location>
        <position position="108"/>
    </location>
</feature>
<gene>
    <name type="primary">CMTR1</name>
    <name type="synonym">FTSJD2</name>
</gene>